<comment type="cofactor">
    <cofactor evidence="1">
        <name>Mg(2+)</name>
        <dbReference type="ChEBI" id="CHEBI:18420"/>
    </cofactor>
    <cofactor evidence="1">
        <name>Mn(2+)</name>
        <dbReference type="ChEBI" id="CHEBI:29035"/>
    </cofactor>
    <text evidence="1">Binds 2 magnesium or manganese ions per subunit.</text>
</comment>
<comment type="similarity">
    <text evidence="1">Belongs to the RimK family.</text>
</comment>
<organism>
    <name type="scientific">Nitrosococcus oceani (strain ATCC 19707 / BCRC 17464 / JCM 30415 / NCIMB 11848 / C-107)</name>
    <dbReference type="NCBI Taxonomy" id="323261"/>
    <lineage>
        <taxon>Bacteria</taxon>
        <taxon>Pseudomonadati</taxon>
        <taxon>Pseudomonadota</taxon>
        <taxon>Gammaproteobacteria</taxon>
        <taxon>Chromatiales</taxon>
        <taxon>Chromatiaceae</taxon>
        <taxon>Nitrosococcus</taxon>
    </lineage>
</organism>
<feature type="chain" id="PRO_0000205466" description="Probable alpha-L-glutamate ligase">
    <location>
        <begin position="1"/>
        <end position="301"/>
    </location>
</feature>
<feature type="domain" description="ATP-grasp" evidence="1">
    <location>
        <begin position="104"/>
        <end position="287"/>
    </location>
</feature>
<feature type="binding site" evidence="1">
    <location>
        <position position="141"/>
    </location>
    <ligand>
        <name>ATP</name>
        <dbReference type="ChEBI" id="CHEBI:30616"/>
    </ligand>
</feature>
<feature type="binding site" evidence="1">
    <location>
        <begin position="178"/>
        <end position="179"/>
    </location>
    <ligand>
        <name>ATP</name>
        <dbReference type="ChEBI" id="CHEBI:30616"/>
    </ligand>
</feature>
<feature type="binding site" evidence="1">
    <location>
        <position position="187"/>
    </location>
    <ligand>
        <name>ATP</name>
        <dbReference type="ChEBI" id="CHEBI:30616"/>
    </ligand>
</feature>
<feature type="binding site" evidence="1">
    <location>
        <begin position="211"/>
        <end position="213"/>
    </location>
    <ligand>
        <name>ATP</name>
        <dbReference type="ChEBI" id="CHEBI:30616"/>
    </ligand>
</feature>
<feature type="binding site" evidence="1">
    <location>
        <position position="248"/>
    </location>
    <ligand>
        <name>Mg(2+)</name>
        <dbReference type="ChEBI" id="CHEBI:18420"/>
        <label>1</label>
    </ligand>
</feature>
<feature type="binding site" evidence="1">
    <location>
        <position position="248"/>
    </location>
    <ligand>
        <name>Mn(2+)</name>
        <dbReference type="ChEBI" id="CHEBI:29035"/>
        <label>1</label>
    </ligand>
</feature>
<feature type="binding site" evidence="1">
    <location>
        <position position="260"/>
    </location>
    <ligand>
        <name>Mg(2+)</name>
        <dbReference type="ChEBI" id="CHEBI:18420"/>
        <label>1</label>
    </ligand>
</feature>
<feature type="binding site" evidence="1">
    <location>
        <position position="260"/>
    </location>
    <ligand>
        <name>Mg(2+)</name>
        <dbReference type="ChEBI" id="CHEBI:18420"/>
        <label>2</label>
    </ligand>
</feature>
<feature type="binding site" evidence="1">
    <location>
        <position position="260"/>
    </location>
    <ligand>
        <name>Mn(2+)</name>
        <dbReference type="ChEBI" id="CHEBI:29035"/>
        <label>1</label>
    </ligand>
</feature>
<feature type="binding site" evidence="1">
    <location>
        <position position="260"/>
    </location>
    <ligand>
        <name>Mn(2+)</name>
        <dbReference type="ChEBI" id="CHEBI:29035"/>
        <label>2</label>
    </ligand>
</feature>
<feature type="binding site" evidence="1">
    <location>
        <position position="262"/>
    </location>
    <ligand>
        <name>Mg(2+)</name>
        <dbReference type="ChEBI" id="CHEBI:18420"/>
        <label>2</label>
    </ligand>
</feature>
<feature type="binding site" evidence="1">
    <location>
        <position position="262"/>
    </location>
    <ligand>
        <name>Mn(2+)</name>
        <dbReference type="ChEBI" id="CHEBI:29035"/>
        <label>2</label>
    </ligand>
</feature>
<proteinExistence type="inferred from homology"/>
<accession>Q3JAW3</accession>
<sequence length="301" mass="32627">MKIAVLSRNAKLYSTRRLVEAAKTRGHEVRVLDVLRCYMNIASHRPSIHYKGEDLTGFDAVIPRIGASVTFYGTAVLRQFEMIGVYPLSESVAITRSRDKLRSLQLLARKGIGLPVTGFAHAPDEIDDLIKMVGGAPVVIKLLEGTQGIGVVLAENKKAAQSVIEAFMGLKTHILVQEFIKETAGSDIRCFIIGDKVVAAMKRQAPEGEFRSNLHRGGSASLVRITPEERSTAIRAAQTMGLNVAGVDILRSNHGPLVMEVNSSPGLEGIESATGKDVATKVIEFIEKNATRGRTRTRGKG</sequence>
<name>RIMK_NITOC</name>
<reference key="1">
    <citation type="journal article" date="2006" name="Appl. Environ. Microbiol.">
        <title>Complete genome sequence of the marine, chemolithoautotrophic, ammonia-oxidizing bacterium Nitrosococcus oceani ATCC 19707.</title>
        <authorList>
            <person name="Klotz M.G."/>
            <person name="Arp D.J."/>
            <person name="Chain P.S.G."/>
            <person name="El-Sheikh A.F."/>
            <person name="Hauser L.J."/>
            <person name="Hommes N.G."/>
            <person name="Larimer F.W."/>
            <person name="Malfatti S.A."/>
            <person name="Norton J.M."/>
            <person name="Poret-Peterson A.T."/>
            <person name="Vergez L.M."/>
            <person name="Ward B.B."/>
        </authorList>
    </citation>
    <scope>NUCLEOTIDE SEQUENCE [LARGE SCALE GENOMIC DNA]</scope>
    <source>
        <strain>ATCC 19707 / BCRC 17464 / JCM 30415 / NCIMB 11848 / C-107</strain>
    </source>
</reference>
<evidence type="ECO:0000255" key="1">
    <source>
        <dbReference type="HAMAP-Rule" id="MF_01552"/>
    </source>
</evidence>
<gene>
    <name evidence="1" type="primary">rimK</name>
    <name type="ordered locus">Noc_1549</name>
</gene>
<dbReference type="EC" id="6.3.2.-" evidence="1"/>
<dbReference type="EMBL" id="CP000127">
    <property type="protein sequence ID" value="ABA58033.1"/>
    <property type="molecule type" value="Genomic_DNA"/>
</dbReference>
<dbReference type="RefSeq" id="WP_002810561.1">
    <property type="nucleotide sequence ID" value="NC_007484.1"/>
</dbReference>
<dbReference type="SMR" id="Q3JAW3"/>
<dbReference type="FunCoup" id="Q3JAW3">
    <property type="interactions" value="218"/>
</dbReference>
<dbReference type="STRING" id="323261.Noc_1549"/>
<dbReference type="KEGG" id="noc:Noc_1549"/>
<dbReference type="eggNOG" id="COG0189">
    <property type="taxonomic scope" value="Bacteria"/>
</dbReference>
<dbReference type="HOGENOM" id="CLU_054353_0_1_6"/>
<dbReference type="InParanoid" id="Q3JAW3"/>
<dbReference type="Proteomes" id="UP000006838">
    <property type="component" value="Chromosome"/>
</dbReference>
<dbReference type="GO" id="GO:0005737">
    <property type="term" value="C:cytoplasm"/>
    <property type="evidence" value="ECO:0007669"/>
    <property type="project" value="TreeGrafter"/>
</dbReference>
<dbReference type="GO" id="GO:0005524">
    <property type="term" value="F:ATP binding"/>
    <property type="evidence" value="ECO:0007669"/>
    <property type="project" value="UniProtKB-UniRule"/>
</dbReference>
<dbReference type="GO" id="GO:0046872">
    <property type="term" value="F:metal ion binding"/>
    <property type="evidence" value="ECO:0007669"/>
    <property type="project" value="UniProtKB-KW"/>
</dbReference>
<dbReference type="GO" id="GO:0018169">
    <property type="term" value="F:ribosomal S6-glutamic acid ligase activity"/>
    <property type="evidence" value="ECO:0007669"/>
    <property type="project" value="TreeGrafter"/>
</dbReference>
<dbReference type="GO" id="GO:0036211">
    <property type="term" value="P:protein modification process"/>
    <property type="evidence" value="ECO:0007669"/>
    <property type="project" value="InterPro"/>
</dbReference>
<dbReference type="GO" id="GO:0009432">
    <property type="term" value="P:SOS response"/>
    <property type="evidence" value="ECO:0007669"/>
    <property type="project" value="TreeGrafter"/>
</dbReference>
<dbReference type="GO" id="GO:0006412">
    <property type="term" value="P:translation"/>
    <property type="evidence" value="ECO:0007669"/>
    <property type="project" value="UniProtKB-KW"/>
</dbReference>
<dbReference type="FunFam" id="3.40.50.20:FF:000004">
    <property type="entry name" value="Probable alpha-L-glutamate ligase"/>
    <property type="match status" value="1"/>
</dbReference>
<dbReference type="FunFam" id="3.30.1490.20:FF:000005">
    <property type="entry name" value="Probable alpha-L-glutamate ligase 1"/>
    <property type="match status" value="1"/>
</dbReference>
<dbReference type="FunFam" id="3.30.470.20:FF:000016">
    <property type="entry name" value="Ribosomal protein S6--L-glutamate ligase"/>
    <property type="match status" value="1"/>
</dbReference>
<dbReference type="Gene3D" id="3.40.50.20">
    <property type="match status" value="1"/>
</dbReference>
<dbReference type="Gene3D" id="3.30.1490.20">
    <property type="entry name" value="ATP-grasp fold, A domain"/>
    <property type="match status" value="1"/>
</dbReference>
<dbReference type="Gene3D" id="3.30.470.20">
    <property type="entry name" value="ATP-grasp fold, B domain"/>
    <property type="match status" value="1"/>
</dbReference>
<dbReference type="HAMAP" id="MF_01552">
    <property type="entry name" value="RimK"/>
    <property type="match status" value="1"/>
</dbReference>
<dbReference type="InterPro" id="IPR011761">
    <property type="entry name" value="ATP-grasp"/>
</dbReference>
<dbReference type="InterPro" id="IPR013651">
    <property type="entry name" value="ATP-grasp_RimK-type"/>
</dbReference>
<dbReference type="InterPro" id="IPR013815">
    <property type="entry name" value="ATP_grasp_subdomain_1"/>
</dbReference>
<dbReference type="InterPro" id="IPR023533">
    <property type="entry name" value="RimK"/>
</dbReference>
<dbReference type="InterPro" id="IPR041107">
    <property type="entry name" value="Rimk_N"/>
</dbReference>
<dbReference type="InterPro" id="IPR004666">
    <property type="entry name" value="Rp_bS6_RimK/Lys_biosynth_LsyX"/>
</dbReference>
<dbReference type="NCBIfam" id="NF007764">
    <property type="entry name" value="PRK10446.1"/>
    <property type="match status" value="1"/>
</dbReference>
<dbReference type="NCBIfam" id="TIGR00768">
    <property type="entry name" value="rimK_fam"/>
    <property type="match status" value="1"/>
</dbReference>
<dbReference type="PANTHER" id="PTHR21621:SF7">
    <property type="entry name" value="RIBOSOMAL PROTEIN BS6--L-GLUTAMATE LIGASE"/>
    <property type="match status" value="1"/>
</dbReference>
<dbReference type="PANTHER" id="PTHR21621">
    <property type="entry name" value="RIBOSOMAL PROTEIN S6 MODIFICATION PROTEIN"/>
    <property type="match status" value="1"/>
</dbReference>
<dbReference type="Pfam" id="PF08443">
    <property type="entry name" value="RimK"/>
    <property type="match status" value="1"/>
</dbReference>
<dbReference type="Pfam" id="PF18030">
    <property type="entry name" value="Rimk_N"/>
    <property type="match status" value="1"/>
</dbReference>
<dbReference type="SUPFAM" id="SSF56059">
    <property type="entry name" value="Glutathione synthetase ATP-binding domain-like"/>
    <property type="match status" value="1"/>
</dbReference>
<dbReference type="PROSITE" id="PS50975">
    <property type="entry name" value="ATP_GRASP"/>
    <property type="match status" value="1"/>
</dbReference>
<keyword id="KW-0067">ATP-binding</keyword>
<keyword id="KW-0436">Ligase</keyword>
<keyword id="KW-0460">Magnesium</keyword>
<keyword id="KW-0464">Manganese</keyword>
<keyword id="KW-0479">Metal-binding</keyword>
<keyword id="KW-0547">Nucleotide-binding</keyword>
<keyword id="KW-0648">Protein biosynthesis</keyword>
<keyword id="KW-1185">Reference proteome</keyword>
<protein>
    <recommendedName>
        <fullName evidence="1">Probable alpha-L-glutamate ligase</fullName>
        <ecNumber evidence="1">6.3.2.-</ecNumber>
    </recommendedName>
</protein>